<gene>
    <name type="primary">MIC60</name>
    <name type="ORF">UREG_02759</name>
</gene>
<accession>C4JHS3</accession>
<proteinExistence type="inferred from homology"/>
<protein>
    <recommendedName>
        <fullName>MICOS complex subunit MIC60</fullName>
    </recommendedName>
    <alternativeName>
        <fullName>Mitofilin</fullName>
    </alternativeName>
</protein>
<sequence length="668" mass="74143">MLRSSIAPSRQLLSPTVSRQWLQASRRCYSRVRSPAAVSKGIPAFTPRGHAFTTSARLANDPNIRSPPSPSSESTIPPESVPRPPPSHPIQTSPGSTIEGRTQPPPPPPVTNTPPPPPPPPPPAPKKGGRLRRLLIYLILTTGLAYAGGVWLSLKSDNFHDFFTEYIPYGEEAVLYVEEQDFRRRFPNATKQISRRAVEPRDEGQNVTIPGKSGVSWRVSEGQKETKEDGSDVSRRGKHMSATEANTAKEATKTSTVEETKAKKQVESAAPTTEKKSASETVKPALEEPRAPAIPTIDSVEPLSMLVDEPTVQELTKIVNDLIAVINADESSSRFTSTLSKAKADFQRLGEQIAVLRQDAQDAARVEIENARAEMERTANELIRRIDEVRAEDAAQFREEYESERERLANAYQEKIKTELQRVQEVAEQRLRNELVEQAIELNRKFLSDVRSLVEKEREGRLSKLSELTANVGELEKLTAEWNSVVDTNLNTQQLQVAVDAVRSALENSDIPKPFINELVAVKELASDDQVVDAAISSISPVAYQRGIPSPAQIVERFRRLATEVRKASLLPENAGIASHAASYMASKVMFKKQGSDDGDDVESILTRTENLLEEGRLDEAAREMNSLQGWSKILSKDWLADVRRVLEVKQALEIIETEARLRCLQVE</sequence>
<organism>
    <name type="scientific">Uncinocarpus reesii (strain UAMH 1704)</name>
    <dbReference type="NCBI Taxonomy" id="336963"/>
    <lineage>
        <taxon>Eukaryota</taxon>
        <taxon>Fungi</taxon>
        <taxon>Dikarya</taxon>
        <taxon>Ascomycota</taxon>
        <taxon>Pezizomycotina</taxon>
        <taxon>Eurotiomycetes</taxon>
        <taxon>Eurotiomycetidae</taxon>
        <taxon>Onygenales</taxon>
        <taxon>Onygenaceae</taxon>
        <taxon>Uncinocarpus</taxon>
    </lineage>
</organism>
<reference key="1">
    <citation type="journal article" date="2009" name="Genome Res.">
        <title>Comparative genomic analyses of the human fungal pathogens Coccidioides and their relatives.</title>
        <authorList>
            <person name="Sharpton T.J."/>
            <person name="Stajich J.E."/>
            <person name="Rounsley S.D."/>
            <person name="Gardner M.J."/>
            <person name="Wortman J.R."/>
            <person name="Jordar V.S."/>
            <person name="Maiti R."/>
            <person name="Kodira C.D."/>
            <person name="Neafsey D.E."/>
            <person name="Zeng Q."/>
            <person name="Hung C.-Y."/>
            <person name="McMahan C."/>
            <person name="Muszewska A."/>
            <person name="Grynberg M."/>
            <person name="Mandel M.A."/>
            <person name="Kellner E.M."/>
            <person name="Barker B.M."/>
            <person name="Galgiani J.N."/>
            <person name="Orbach M.J."/>
            <person name="Kirkland T.N."/>
            <person name="Cole G.T."/>
            <person name="Henn M.R."/>
            <person name="Birren B.W."/>
            <person name="Taylor J.W."/>
        </authorList>
    </citation>
    <scope>NUCLEOTIDE SEQUENCE [LARGE SCALE GENOMIC DNA]</scope>
    <source>
        <strain>UAMH 1704</strain>
    </source>
</reference>
<keyword id="KW-0175">Coiled coil</keyword>
<keyword id="KW-0472">Membrane</keyword>
<keyword id="KW-0496">Mitochondrion</keyword>
<keyword id="KW-0999">Mitochondrion inner membrane</keyword>
<keyword id="KW-1185">Reference proteome</keyword>
<keyword id="KW-0809">Transit peptide</keyword>
<keyword id="KW-0812">Transmembrane</keyword>
<keyword id="KW-1133">Transmembrane helix</keyword>
<comment type="function">
    <text evidence="1">Component of the MICOS complex, a large protein complex of the mitochondrial inner membrane that plays crucial roles in the maintenance of crista junctions, inner membrane architecture, and formation of contact sites to the outer membrane. Plays a role in keeping cristae membranes connected to the inner boundary membrane. Also promotes protein import via the mitochondrial intermembrane space assembly (MIA) pathway (By similarity).</text>
</comment>
<comment type="subunit">
    <text evidence="1">Component of the mitochondrial contact site and cristae organizing system (MICOS) complex.</text>
</comment>
<comment type="subcellular location">
    <subcellularLocation>
        <location evidence="1">Mitochondrion inner membrane</location>
        <topology evidence="1">Single-pass membrane protein</topology>
    </subcellularLocation>
</comment>
<comment type="similarity">
    <text evidence="4">Belongs to the MICOS complex subunit Mic60 family.</text>
</comment>
<dbReference type="EMBL" id="CH476615">
    <property type="protein sequence ID" value="EEP77910.1"/>
    <property type="molecule type" value="Genomic_DNA"/>
</dbReference>
<dbReference type="RefSeq" id="XP_002543243.1">
    <property type="nucleotide sequence ID" value="XM_002543197.1"/>
</dbReference>
<dbReference type="SMR" id="C4JHS3"/>
<dbReference type="FunCoup" id="C4JHS3">
    <property type="interactions" value="145"/>
</dbReference>
<dbReference type="STRING" id="336963.C4JHS3"/>
<dbReference type="GeneID" id="8437546"/>
<dbReference type="KEGG" id="ure:UREG_02759"/>
<dbReference type="VEuPathDB" id="FungiDB:UREG_02759"/>
<dbReference type="eggNOG" id="KOG1854">
    <property type="taxonomic scope" value="Eukaryota"/>
</dbReference>
<dbReference type="HOGENOM" id="CLU_008024_1_2_1"/>
<dbReference type="InParanoid" id="C4JHS3"/>
<dbReference type="OMA" id="RLDHQMQ"/>
<dbReference type="OrthoDB" id="10261039at2759"/>
<dbReference type="Proteomes" id="UP000002058">
    <property type="component" value="Unassembled WGS sequence"/>
</dbReference>
<dbReference type="GO" id="GO:0061617">
    <property type="term" value="C:MICOS complex"/>
    <property type="evidence" value="ECO:0007669"/>
    <property type="project" value="TreeGrafter"/>
</dbReference>
<dbReference type="GO" id="GO:0042407">
    <property type="term" value="P:cristae formation"/>
    <property type="evidence" value="ECO:0007669"/>
    <property type="project" value="TreeGrafter"/>
</dbReference>
<dbReference type="InterPro" id="IPR019133">
    <property type="entry name" value="MIC60"/>
</dbReference>
<dbReference type="PANTHER" id="PTHR15415:SF7">
    <property type="entry name" value="MICOS COMPLEX SUBUNIT MIC60"/>
    <property type="match status" value="1"/>
</dbReference>
<dbReference type="PANTHER" id="PTHR15415">
    <property type="entry name" value="MITOFILIN"/>
    <property type="match status" value="1"/>
</dbReference>
<dbReference type="Pfam" id="PF09731">
    <property type="entry name" value="Mitofilin"/>
    <property type="match status" value="2"/>
</dbReference>
<evidence type="ECO:0000250" key="1"/>
<evidence type="ECO:0000255" key="2"/>
<evidence type="ECO:0000256" key="3">
    <source>
        <dbReference type="SAM" id="MobiDB-lite"/>
    </source>
</evidence>
<evidence type="ECO:0000305" key="4"/>
<name>MIC60_UNCRE</name>
<feature type="transit peptide" description="Mitochondrion" evidence="2">
    <location>
        <begin position="1"/>
        <end position="29"/>
    </location>
</feature>
<feature type="chain" id="PRO_0000406677" description="MICOS complex subunit MIC60">
    <location>
        <begin position="30"/>
        <end position="668"/>
    </location>
</feature>
<feature type="topological domain" description="Mitochondrial matrix" evidence="2">
    <location>
        <begin position="30"/>
        <end position="133"/>
    </location>
</feature>
<feature type="transmembrane region" description="Helical" evidence="2">
    <location>
        <begin position="134"/>
        <end position="154"/>
    </location>
</feature>
<feature type="topological domain" description="Mitochondrial intermembrane" evidence="2">
    <location>
        <begin position="155"/>
        <end position="668"/>
    </location>
</feature>
<feature type="region of interest" description="Disordered" evidence="3">
    <location>
        <begin position="30"/>
        <end position="49"/>
    </location>
</feature>
<feature type="region of interest" description="Disordered" evidence="3">
    <location>
        <begin position="54"/>
        <end position="128"/>
    </location>
</feature>
<feature type="region of interest" description="Disordered" evidence="3">
    <location>
        <begin position="195"/>
        <end position="284"/>
    </location>
</feature>
<feature type="coiled-coil region" evidence="2">
    <location>
        <begin position="338"/>
        <end position="434"/>
    </location>
</feature>
<feature type="compositionally biased region" description="Pro residues" evidence="3">
    <location>
        <begin position="79"/>
        <end position="88"/>
    </location>
</feature>
<feature type="compositionally biased region" description="Polar residues" evidence="3">
    <location>
        <begin position="90"/>
        <end position="100"/>
    </location>
</feature>
<feature type="compositionally biased region" description="Pro residues" evidence="3">
    <location>
        <begin position="103"/>
        <end position="125"/>
    </location>
</feature>
<feature type="compositionally biased region" description="Basic and acidic residues" evidence="3">
    <location>
        <begin position="221"/>
        <end position="235"/>
    </location>
</feature>
<feature type="compositionally biased region" description="Basic and acidic residues" evidence="3">
    <location>
        <begin position="250"/>
        <end position="266"/>
    </location>
</feature>